<accession>P56236</accession>
<sequence length="25" mass="2452">GLVSSIGKALGGLLADVVKTKEQPA</sequence>
<proteinExistence type="evidence at protein level"/>
<dbReference type="GO" id="GO:0005576">
    <property type="term" value="C:extracellular region"/>
    <property type="evidence" value="ECO:0007669"/>
    <property type="project" value="UniProtKB-SubCell"/>
</dbReference>
<dbReference type="GO" id="GO:0042742">
    <property type="term" value="P:defense response to bacterium"/>
    <property type="evidence" value="ECO:0007669"/>
    <property type="project" value="UniProtKB-KW"/>
</dbReference>
<dbReference type="InterPro" id="IPR032021">
    <property type="entry name" value="Frog_Litoria"/>
</dbReference>
<dbReference type="Pfam" id="PF16049">
    <property type="entry name" value="Antimicrobial24"/>
    <property type="match status" value="1"/>
</dbReference>
<name>CR24_RANCA</name>
<protein>
    <recommendedName>
        <fullName>Caerin-2.4</fullName>
    </recommendedName>
</protein>
<feature type="peptide" id="PRO_0000043745" description="Caerin-2.4">
    <location>
        <begin position="1"/>
        <end position="25"/>
    </location>
</feature>
<comment type="function">
    <text>Antibacterial peptide, that adopts an alpha helical conformation which can disrupt bacterial membranes. Each caerin displays a different antimicrobial specificity.</text>
</comment>
<comment type="subcellular location">
    <subcellularLocation>
        <location>Secreted</location>
    </subcellularLocation>
</comment>
<comment type="tissue specificity">
    <text>Expressed by the skin parotoid and/or rostral glands.</text>
</comment>
<comment type="mass spectrometry" mass="2450.0" method="FAB" evidence="1"/>
<comment type="similarity">
    <text evidence="2">Belongs to the frog skin active peptide (FSAP) family. Caerin subfamily.</text>
</comment>
<evidence type="ECO:0000269" key="1">
    <source ref="1"/>
</evidence>
<evidence type="ECO:0000305" key="2"/>
<reference key="1">
    <citation type="journal article" date="1993" name="J. Chem. Res.">
        <title>Peptides from Australian frogs. The structures of the caerins from Litoria caerula.</title>
        <authorList>
            <person name="Stone D.J.M."/>
            <person name="Waugh R.J."/>
            <person name="Bowie J.H."/>
            <person name="Wallace J.C."/>
            <person name="Tyler M.J."/>
        </authorList>
    </citation>
    <scope>PROTEIN SEQUENCE</scope>
    <scope>MASS SPECTROMETRY</scope>
    <source>
        <tissue>Parotoid gland</tissue>
    </source>
</reference>
<organism>
    <name type="scientific">Ranoidea caerulea</name>
    <name type="common">Green tree frog</name>
    <name type="synonym">Litoria caerulea</name>
    <dbReference type="NCBI Taxonomy" id="30344"/>
    <lineage>
        <taxon>Eukaryota</taxon>
        <taxon>Metazoa</taxon>
        <taxon>Chordata</taxon>
        <taxon>Craniata</taxon>
        <taxon>Vertebrata</taxon>
        <taxon>Euteleostomi</taxon>
        <taxon>Amphibia</taxon>
        <taxon>Batrachia</taxon>
        <taxon>Anura</taxon>
        <taxon>Neobatrachia</taxon>
        <taxon>Hyloidea</taxon>
        <taxon>Hylidae</taxon>
        <taxon>Pelodryadinae</taxon>
        <taxon>Ranoidea</taxon>
    </lineage>
</organism>
<keyword id="KW-0878">Amphibian defense peptide</keyword>
<keyword id="KW-0044">Antibiotic</keyword>
<keyword id="KW-0929">Antimicrobial</keyword>
<keyword id="KW-0903">Direct protein sequencing</keyword>
<keyword id="KW-0964">Secreted</keyword>